<proteinExistence type="inferred from homology"/>
<reference key="1">
    <citation type="journal article" date="2002" name="J. Bacteriol.">
        <title>Genome sequence and analysis of the oral bacterium Fusobacterium nucleatum strain ATCC 25586.</title>
        <authorList>
            <person name="Kapatral V."/>
            <person name="Anderson I."/>
            <person name="Ivanova N."/>
            <person name="Reznik G."/>
            <person name="Los T."/>
            <person name="Lykidis A."/>
            <person name="Bhattacharyya A."/>
            <person name="Bartman A."/>
            <person name="Gardner W."/>
            <person name="Grechkin G."/>
            <person name="Zhu L."/>
            <person name="Vasieva O."/>
            <person name="Chu L."/>
            <person name="Kogan Y."/>
            <person name="Chaga O."/>
            <person name="Goltsman E."/>
            <person name="Bernal A."/>
            <person name="Larsen N."/>
            <person name="D'Souza M."/>
            <person name="Walunas T."/>
            <person name="Pusch G."/>
            <person name="Haselkorn R."/>
            <person name="Fonstein M."/>
            <person name="Kyrpides N.C."/>
            <person name="Overbeek R."/>
        </authorList>
    </citation>
    <scope>NUCLEOTIDE SEQUENCE [LARGE SCALE GENOMIC DNA]</scope>
    <source>
        <strain>ATCC 25586 / DSM 15643 / BCRC 10681 / CIP 101130 / JCM 8532 / KCTC 2640 / LMG 13131 / VPI 4355</strain>
    </source>
</reference>
<gene>
    <name evidence="1" type="primary">frr</name>
    <name type="ordered locus">FN1623</name>
</gene>
<dbReference type="EMBL" id="AE009951">
    <property type="protein sequence ID" value="AAL93738.1"/>
    <property type="molecule type" value="Genomic_DNA"/>
</dbReference>
<dbReference type="RefSeq" id="NP_602439.1">
    <property type="nucleotide sequence ID" value="NC_003454.1"/>
</dbReference>
<dbReference type="RefSeq" id="WP_005904126.1">
    <property type="nucleotide sequence ID" value="NZ_OZ209243.1"/>
</dbReference>
<dbReference type="SMR" id="Q8R5Z9"/>
<dbReference type="FunCoup" id="Q8R5Z9">
    <property type="interactions" value="417"/>
</dbReference>
<dbReference type="STRING" id="190304.FN1623"/>
<dbReference type="PaxDb" id="190304-FN1623"/>
<dbReference type="EnsemblBacteria" id="AAL93738">
    <property type="protein sequence ID" value="AAL93738"/>
    <property type="gene ID" value="FN1623"/>
</dbReference>
<dbReference type="GeneID" id="79782562"/>
<dbReference type="KEGG" id="fnu:FN1623"/>
<dbReference type="PATRIC" id="fig|190304.8.peg.116"/>
<dbReference type="eggNOG" id="COG0233">
    <property type="taxonomic scope" value="Bacteria"/>
</dbReference>
<dbReference type="HOGENOM" id="CLU_073981_2_0_0"/>
<dbReference type="InParanoid" id="Q8R5Z9"/>
<dbReference type="BioCyc" id="FNUC190304:G1FZS-126-MONOMER"/>
<dbReference type="Proteomes" id="UP000002521">
    <property type="component" value="Chromosome"/>
</dbReference>
<dbReference type="GO" id="GO:0005737">
    <property type="term" value="C:cytoplasm"/>
    <property type="evidence" value="ECO:0007669"/>
    <property type="project" value="UniProtKB-SubCell"/>
</dbReference>
<dbReference type="GO" id="GO:0043023">
    <property type="term" value="F:ribosomal large subunit binding"/>
    <property type="evidence" value="ECO:0000318"/>
    <property type="project" value="GO_Central"/>
</dbReference>
<dbReference type="GO" id="GO:0006412">
    <property type="term" value="P:translation"/>
    <property type="evidence" value="ECO:0000318"/>
    <property type="project" value="GO_Central"/>
</dbReference>
<dbReference type="GO" id="GO:0006415">
    <property type="term" value="P:translational termination"/>
    <property type="evidence" value="ECO:0007669"/>
    <property type="project" value="UniProtKB-UniRule"/>
</dbReference>
<dbReference type="CDD" id="cd00520">
    <property type="entry name" value="RRF"/>
    <property type="match status" value="1"/>
</dbReference>
<dbReference type="FunFam" id="1.10.132.20:FF:000001">
    <property type="entry name" value="Ribosome-recycling factor"/>
    <property type="match status" value="1"/>
</dbReference>
<dbReference type="FunFam" id="3.30.1360.40:FF:000001">
    <property type="entry name" value="Ribosome-recycling factor"/>
    <property type="match status" value="1"/>
</dbReference>
<dbReference type="Gene3D" id="3.30.1360.40">
    <property type="match status" value="1"/>
</dbReference>
<dbReference type="Gene3D" id="1.10.132.20">
    <property type="entry name" value="Ribosome-recycling factor"/>
    <property type="match status" value="1"/>
</dbReference>
<dbReference type="HAMAP" id="MF_00040">
    <property type="entry name" value="RRF"/>
    <property type="match status" value="1"/>
</dbReference>
<dbReference type="InterPro" id="IPR002661">
    <property type="entry name" value="Ribosome_recyc_fac"/>
</dbReference>
<dbReference type="InterPro" id="IPR023584">
    <property type="entry name" value="Ribosome_recyc_fac_dom"/>
</dbReference>
<dbReference type="InterPro" id="IPR036191">
    <property type="entry name" value="RRF_sf"/>
</dbReference>
<dbReference type="NCBIfam" id="TIGR00496">
    <property type="entry name" value="frr"/>
    <property type="match status" value="1"/>
</dbReference>
<dbReference type="PANTHER" id="PTHR20982:SF3">
    <property type="entry name" value="MITOCHONDRIAL RIBOSOME RECYCLING FACTOR PSEUDO 1"/>
    <property type="match status" value="1"/>
</dbReference>
<dbReference type="PANTHER" id="PTHR20982">
    <property type="entry name" value="RIBOSOME RECYCLING FACTOR"/>
    <property type="match status" value="1"/>
</dbReference>
<dbReference type="Pfam" id="PF01765">
    <property type="entry name" value="RRF"/>
    <property type="match status" value="1"/>
</dbReference>
<dbReference type="SUPFAM" id="SSF55194">
    <property type="entry name" value="Ribosome recycling factor, RRF"/>
    <property type="match status" value="1"/>
</dbReference>
<organism>
    <name type="scientific">Fusobacterium nucleatum subsp. nucleatum (strain ATCC 25586 / DSM 15643 / BCRC 10681 / CIP 101130 / JCM 8532 / KCTC 2640 / LMG 13131 / VPI 4355)</name>
    <dbReference type="NCBI Taxonomy" id="190304"/>
    <lineage>
        <taxon>Bacteria</taxon>
        <taxon>Fusobacteriati</taxon>
        <taxon>Fusobacteriota</taxon>
        <taxon>Fusobacteriia</taxon>
        <taxon>Fusobacteriales</taxon>
        <taxon>Fusobacteriaceae</taxon>
        <taxon>Fusobacterium</taxon>
    </lineage>
</organism>
<accession>Q8R5Z9</accession>
<keyword id="KW-0963">Cytoplasm</keyword>
<keyword id="KW-0648">Protein biosynthesis</keyword>
<keyword id="KW-1185">Reference proteome</keyword>
<name>RRF_FUSNN</name>
<sequence>MSIASDKLVKECEEKMVKTIEAVKEKFTAIRAGRANVSMLDGIKVENYGSEVPLNQIGTVSAPEARLLVIDPWDKTLISKIEKAILAANIGMTPNNDGRVIRLVLPELTADRRKEYVKLAKNEAENGKIAIRNIRKDINNHLKKLEKDKENPISEDELKKEETNVQTLTDKYVKEIDDLLAKKEKEITTI</sequence>
<comment type="function">
    <text evidence="1">Responsible for the release of ribosomes from messenger RNA at the termination of protein biosynthesis. May increase the efficiency of translation by recycling ribosomes from one round of translation to another.</text>
</comment>
<comment type="subcellular location">
    <subcellularLocation>
        <location evidence="1">Cytoplasm</location>
    </subcellularLocation>
</comment>
<comment type="similarity">
    <text evidence="1">Belongs to the RRF family.</text>
</comment>
<evidence type="ECO:0000255" key="1">
    <source>
        <dbReference type="HAMAP-Rule" id="MF_00040"/>
    </source>
</evidence>
<feature type="chain" id="PRO_0000167462" description="Ribosome-recycling factor">
    <location>
        <begin position="1"/>
        <end position="190"/>
    </location>
</feature>
<protein>
    <recommendedName>
        <fullName evidence="1">Ribosome-recycling factor</fullName>
        <shortName evidence="1">RRF</shortName>
    </recommendedName>
    <alternativeName>
        <fullName evidence="1">Ribosome-releasing factor</fullName>
    </alternativeName>
</protein>